<proteinExistence type="inferred from homology"/>
<accession>A7MIK5</accession>
<feature type="chain" id="PRO_1000059558" description="Chaperone protein DnaK">
    <location>
        <begin position="1"/>
        <end position="638"/>
    </location>
</feature>
<feature type="region of interest" description="Disordered" evidence="2">
    <location>
        <begin position="603"/>
        <end position="638"/>
    </location>
</feature>
<feature type="compositionally biased region" description="Low complexity" evidence="2">
    <location>
        <begin position="603"/>
        <end position="620"/>
    </location>
</feature>
<feature type="modified residue" description="Phosphothreonine; by autocatalysis" evidence="1">
    <location>
        <position position="199"/>
    </location>
</feature>
<protein>
    <recommendedName>
        <fullName evidence="1">Chaperone protein DnaK</fullName>
    </recommendedName>
    <alternativeName>
        <fullName evidence="1">HSP70</fullName>
    </alternativeName>
    <alternativeName>
        <fullName evidence="1">Heat shock 70 kDa protein</fullName>
    </alternativeName>
    <alternativeName>
        <fullName evidence="1">Heat shock protein 70</fullName>
    </alternativeName>
</protein>
<organism>
    <name type="scientific">Cronobacter sakazakii (strain ATCC BAA-894)</name>
    <name type="common">Enterobacter sakazakii</name>
    <dbReference type="NCBI Taxonomy" id="290339"/>
    <lineage>
        <taxon>Bacteria</taxon>
        <taxon>Pseudomonadati</taxon>
        <taxon>Pseudomonadota</taxon>
        <taxon>Gammaproteobacteria</taxon>
        <taxon>Enterobacterales</taxon>
        <taxon>Enterobacteriaceae</taxon>
        <taxon>Cronobacter</taxon>
    </lineage>
</organism>
<sequence length="638" mass="69217">MGKIIGIDLGTTNSCVAIMDGTQARVLENAEGDRTTPSIIAYTQDGETLVGQPAKRQAVTNPQNTLFAIKRLIGRRFQDEEVQRDVSIMPYKIISADNGDAWLDVKGQKMAPPQISAEVLKKMKKTAEDYLGEPVTEAVITVPAYFNDAQRQATKDAGRIAGLEVKRIINEPTAAALAYGLDKETGNRTIAVYDLGGGTFDISIIEIDEVDGEKTFEVLATNGDTHLGGEDFDSRLINYLVEEFKKDQGIDLRNDPLAMQRLKEAAEKAKIELSSAQQTDVNLPYITADATGPKHMNIKVTRAKLESLVEDLVNRSIEPLKVALQDAGLSVSDINDVILVGGQTRMPMVQKKVAEFFGKEPRKDVNPDEAVAIGAAVQGGVLTGDVKDVLLLDVTPLSLGIETMGGVMTPLITKNTTIPTKHSQVFSTAEDNQSAVTIHVLQGERKRAADNKSLGQFNLDGINPAPRGMPQIEVTFDIDADGILHVSAKDKNSGKEQKITIKASSGLNEEEIQKMVREAEANAEADRKFEELVQTRNQADHLVHSTRKQVEEAGDKLPADDKTAIESALSALEASLKGEDKADIEAKMQALAQVSQKLMEIAQQQHAQQQAGSADASANNAKDDDVVDAEFEEVKDKK</sequence>
<comment type="function">
    <text evidence="1">Acts as a chaperone.</text>
</comment>
<comment type="induction">
    <text evidence="1">By stress conditions e.g. heat shock.</text>
</comment>
<comment type="similarity">
    <text evidence="1">Belongs to the heat shock protein 70 family.</text>
</comment>
<keyword id="KW-0067">ATP-binding</keyword>
<keyword id="KW-0143">Chaperone</keyword>
<keyword id="KW-0547">Nucleotide-binding</keyword>
<keyword id="KW-0597">Phosphoprotein</keyword>
<keyword id="KW-1185">Reference proteome</keyword>
<keyword id="KW-0346">Stress response</keyword>
<gene>
    <name evidence="1" type="primary">dnaK</name>
    <name type="ordered locus">ESA_03326</name>
</gene>
<dbReference type="EMBL" id="CP000783">
    <property type="protein sequence ID" value="ABU78547.1"/>
    <property type="molecule type" value="Genomic_DNA"/>
</dbReference>
<dbReference type="RefSeq" id="WP_004386269.1">
    <property type="nucleotide sequence ID" value="NC_009778.1"/>
</dbReference>
<dbReference type="BMRB" id="A7MIK5"/>
<dbReference type="SMR" id="A7MIK5"/>
<dbReference type="GeneID" id="56732007"/>
<dbReference type="KEGG" id="esa:ESA_03326"/>
<dbReference type="HOGENOM" id="CLU_005965_2_1_6"/>
<dbReference type="Proteomes" id="UP000000260">
    <property type="component" value="Chromosome"/>
</dbReference>
<dbReference type="GO" id="GO:0005524">
    <property type="term" value="F:ATP binding"/>
    <property type="evidence" value="ECO:0007669"/>
    <property type="project" value="UniProtKB-UniRule"/>
</dbReference>
<dbReference type="GO" id="GO:0140662">
    <property type="term" value="F:ATP-dependent protein folding chaperone"/>
    <property type="evidence" value="ECO:0007669"/>
    <property type="project" value="InterPro"/>
</dbReference>
<dbReference type="GO" id="GO:0051082">
    <property type="term" value="F:unfolded protein binding"/>
    <property type="evidence" value="ECO:0007669"/>
    <property type="project" value="InterPro"/>
</dbReference>
<dbReference type="CDD" id="cd10234">
    <property type="entry name" value="ASKHA_NBD_HSP70_DnaK-like"/>
    <property type="match status" value="1"/>
</dbReference>
<dbReference type="FunFam" id="2.60.34.10:FF:000014">
    <property type="entry name" value="Chaperone protein DnaK HSP70"/>
    <property type="match status" value="1"/>
</dbReference>
<dbReference type="FunFam" id="3.30.30.30:FF:000003">
    <property type="entry name" value="Heat shock protein 9"/>
    <property type="match status" value="1"/>
</dbReference>
<dbReference type="FunFam" id="1.20.1270.10:FF:000001">
    <property type="entry name" value="Molecular chaperone DnaK"/>
    <property type="match status" value="1"/>
</dbReference>
<dbReference type="FunFam" id="3.30.420.40:FF:000004">
    <property type="entry name" value="Molecular chaperone DnaK"/>
    <property type="match status" value="1"/>
</dbReference>
<dbReference type="FunFam" id="3.90.640.10:FF:000003">
    <property type="entry name" value="Molecular chaperone DnaK"/>
    <property type="match status" value="1"/>
</dbReference>
<dbReference type="Gene3D" id="1.20.1270.10">
    <property type="match status" value="1"/>
</dbReference>
<dbReference type="Gene3D" id="3.30.420.40">
    <property type="match status" value="2"/>
</dbReference>
<dbReference type="Gene3D" id="3.90.640.10">
    <property type="entry name" value="Actin, Chain A, domain 4"/>
    <property type="match status" value="1"/>
</dbReference>
<dbReference type="Gene3D" id="2.60.34.10">
    <property type="entry name" value="Substrate Binding Domain Of DNAk, Chain A, domain 1"/>
    <property type="match status" value="1"/>
</dbReference>
<dbReference type="HAMAP" id="MF_00332">
    <property type="entry name" value="DnaK"/>
    <property type="match status" value="1"/>
</dbReference>
<dbReference type="InterPro" id="IPR043129">
    <property type="entry name" value="ATPase_NBD"/>
</dbReference>
<dbReference type="InterPro" id="IPR012725">
    <property type="entry name" value="Chaperone_DnaK"/>
</dbReference>
<dbReference type="InterPro" id="IPR018181">
    <property type="entry name" value="Heat_shock_70_CS"/>
</dbReference>
<dbReference type="InterPro" id="IPR029048">
    <property type="entry name" value="HSP70_C_sf"/>
</dbReference>
<dbReference type="InterPro" id="IPR029047">
    <property type="entry name" value="HSP70_peptide-bd_sf"/>
</dbReference>
<dbReference type="InterPro" id="IPR013126">
    <property type="entry name" value="Hsp_70_fam"/>
</dbReference>
<dbReference type="NCBIfam" id="NF001413">
    <property type="entry name" value="PRK00290.1"/>
    <property type="match status" value="1"/>
</dbReference>
<dbReference type="NCBIfam" id="NF003520">
    <property type="entry name" value="PRK05183.1"/>
    <property type="match status" value="1"/>
</dbReference>
<dbReference type="NCBIfam" id="TIGR02350">
    <property type="entry name" value="prok_dnaK"/>
    <property type="match status" value="1"/>
</dbReference>
<dbReference type="PANTHER" id="PTHR19375">
    <property type="entry name" value="HEAT SHOCK PROTEIN 70KDA"/>
    <property type="match status" value="1"/>
</dbReference>
<dbReference type="Pfam" id="PF00012">
    <property type="entry name" value="HSP70"/>
    <property type="match status" value="1"/>
</dbReference>
<dbReference type="PRINTS" id="PR00301">
    <property type="entry name" value="HEATSHOCK70"/>
</dbReference>
<dbReference type="SUPFAM" id="SSF53067">
    <property type="entry name" value="Actin-like ATPase domain"/>
    <property type="match status" value="2"/>
</dbReference>
<dbReference type="SUPFAM" id="SSF100934">
    <property type="entry name" value="Heat shock protein 70kD (HSP70), C-terminal subdomain"/>
    <property type="match status" value="1"/>
</dbReference>
<dbReference type="SUPFAM" id="SSF100920">
    <property type="entry name" value="Heat shock protein 70kD (HSP70), peptide-binding domain"/>
    <property type="match status" value="1"/>
</dbReference>
<dbReference type="PROSITE" id="PS00297">
    <property type="entry name" value="HSP70_1"/>
    <property type="match status" value="1"/>
</dbReference>
<dbReference type="PROSITE" id="PS00329">
    <property type="entry name" value="HSP70_2"/>
    <property type="match status" value="1"/>
</dbReference>
<dbReference type="PROSITE" id="PS01036">
    <property type="entry name" value="HSP70_3"/>
    <property type="match status" value="1"/>
</dbReference>
<reference key="1">
    <citation type="journal article" date="2010" name="PLoS ONE">
        <title>Genome sequence of Cronobacter sakazakii BAA-894 and comparative genomic hybridization analysis with other Cronobacter species.</title>
        <authorList>
            <person name="Kucerova E."/>
            <person name="Clifton S.W."/>
            <person name="Xia X.Q."/>
            <person name="Long F."/>
            <person name="Porwollik S."/>
            <person name="Fulton L."/>
            <person name="Fronick C."/>
            <person name="Minx P."/>
            <person name="Kyung K."/>
            <person name="Warren W."/>
            <person name="Fulton R."/>
            <person name="Feng D."/>
            <person name="Wollam A."/>
            <person name="Shah N."/>
            <person name="Bhonagiri V."/>
            <person name="Nash W.E."/>
            <person name="Hallsworth-Pepin K."/>
            <person name="Wilson R.K."/>
            <person name="McClelland M."/>
            <person name="Forsythe S.J."/>
        </authorList>
    </citation>
    <scope>NUCLEOTIDE SEQUENCE [LARGE SCALE GENOMIC DNA]</scope>
    <source>
        <strain>ATCC BAA-894</strain>
    </source>
</reference>
<evidence type="ECO:0000255" key="1">
    <source>
        <dbReference type="HAMAP-Rule" id="MF_00332"/>
    </source>
</evidence>
<evidence type="ECO:0000256" key="2">
    <source>
        <dbReference type="SAM" id="MobiDB-lite"/>
    </source>
</evidence>
<name>DNAK_CROS8</name>